<organism>
    <name type="scientific">Bacillus subtilis (strain 168)</name>
    <dbReference type="NCBI Taxonomy" id="224308"/>
    <lineage>
        <taxon>Bacteria</taxon>
        <taxon>Bacillati</taxon>
        <taxon>Bacillota</taxon>
        <taxon>Bacilli</taxon>
        <taxon>Bacillales</taxon>
        <taxon>Bacillaceae</taxon>
        <taxon>Bacillus</taxon>
    </lineage>
</organism>
<gene>
    <name type="primary">adhB</name>
    <name type="ordered locus">BSU26970</name>
</gene>
<evidence type="ECO:0000250" key="1"/>
<evidence type="ECO:0000269" key="2">
    <source>
    </source>
</evidence>
<evidence type="ECO:0000305" key="3"/>
<proteinExistence type="inferred from homology"/>
<feature type="chain" id="PRO_0000360860" description="Uncharacterized zinc-type alcohol dehydrogenase-like protein AdhB">
    <location>
        <begin position="1"/>
        <end position="378"/>
    </location>
</feature>
<feature type="binding site" evidence="1">
    <location>
        <position position="38"/>
    </location>
    <ligand>
        <name>Zn(2+)</name>
        <dbReference type="ChEBI" id="CHEBI:29105"/>
        <label>1</label>
        <note>catalytic</note>
    </ligand>
</feature>
<feature type="binding site" evidence="1">
    <location>
        <position position="60"/>
    </location>
    <ligand>
        <name>Zn(2+)</name>
        <dbReference type="ChEBI" id="CHEBI:29105"/>
        <label>1</label>
        <note>catalytic</note>
    </ligand>
</feature>
<feature type="binding site" evidence="1">
    <location>
        <position position="90"/>
    </location>
    <ligand>
        <name>Zn(2+)</name>
        <dbReference type="ChEBI" id="CHEBI:29105"/>
        <label>2</label>
    </ligand>
</feature>
<feature type="binding site" evidence="1">
    <location>
        <position position="93"/>
    </location>
    <ligand>
        <name>Zn(2+)</name>
        <dbReference type="ChEBI" id="CHEBI:29105"/>
        <label>2</label>
    </ligand>
</feature>
<feature type="binding site" evidence="1">
    <location>
        <position position="96"/>
    </location>
    <ligand>
        <name>Zn(2+)</name>
        <dbReference type="ChEBI" id="CHEBI:29105"/>
        <label>2</label>
    </ligand>
</feature>
<feature type="binding site" evidence="1">
    <location>
        <position position="104"/>
    </location>
    <ligand>
        <name>Zn(2+)</name>
        <dbReference type="ChEBI" id="CHEBI:29105"/>
        <label>2</label>
    </ligand>
</feature>
<feature type="sequence conflict" description="In Ref. 1; CAA63472." evidence="3" ref="1">
    <original>I</original>
    <variation>T</variation>
    <location>
        <position position="58"/>
    </location>
</feature>
<accession>O06012</accession>
<accession>Q795Z4</accession>
<protein>
    <recommendedName>
        <fullName>Uncharacterized zinc-type alcohol dehydrogenase-like protein AdhB</fullName>
        <ecNumber>1.-.-.-</ecNumber>
    </recommendedName>
</protein>
<keyword id="KW-0479">Metal-binding</keyword>
<keyword id="KW-0560">Oxidoreductase</keyword>
<keyword id="KW-1185">Reference proteome</keyword>
<keyword id="KW-0862">Zinc</keyword>
<reference key="1">
    <citation type="journal article" date="1997" name="Microbiology">
        <title>A 23911 bp region of the Bacillus subtilis genome comprising genes located upstream and downstream of the lev operon.</title>
        <authorList>
            <person name="Parro V."/>
            <person name="San Roman M."/>
            <person name="Galindo I."/>
            <person name="Purnelle B."/>
            <person name="Bolotin A."/>
            <person name="Sorokin A."/>
            <person name="Mellado R.P."/>
        </authorList>
    </citation>
    <scope>NUCLEOTIDE SEQUENCE [GENOMIC DNA]</scope>
    <source>
        <strain>168</strain>
    </source>
</reference>
<reference key="2">
    <citation type="journal article" date="1997" name="Nature">
        <title>The complete genome sequence of the Gram-positive bacterium Bacillus subtilis.</title>
        <authorList>
            <person name="Kunst F."/>
            <person name="Ogasawara N."/>
            <person name="Moszer I."/>
            <person name="Albertini A.M."/>
            <person name="Alloni G."/>
            <person name="Azevedo V."/>
            <person name="Bertero M.G."/>
            <person name="Bessieres P."/>
            <person name="Bolotin A."/>
            <person name="Borchert S."/>
            <person name="Borriss R."/>
            <person name="Boursier L."/>
            <person name="Brans A."/>
            <person name="Braun M."/>
            <person name="Brignell S.C."/>
            <person name="Bron S."/>
            <person name="Brouillet S."/>
            <person name="Bruschi C.V."/>
            <person name="Caldwell B."/>
            <person name="Capuano V."/>
            <person name="Carter N.M."/>
            <person name="Choi S.-K."/>
            <person name="Codani J.-J."/>
            <person name="Connerton I.F."/>
            <person name="Cummings N.J."/>
            <person name="Daniel R.A."/>
            <person name="Denizot F."/>
            <person name="Devine K.M."/>
            <person name="Duesterhoeft A."/>
            <person name="Ehrlich S.D."/>
            <person name="Emmerson P.T."/>
            <person name="Entian K.-D."/>
            <person name="Errington J."/>
            <person name="Fabret C."/>
            <person name="Ferrari E."/>
            <person name="Foulger D."/>
            <person name="Fritz C."/>
            <person name="Fujita M."/>
            <person name="Fujita Y."/>
            <person name="Fuma S."/>
            <person name="Galizzi A."/>
            <person name="Galleron N."/>
            <person name="Ghim S.-Y."/>
            <person name="Glaser P."/>
            <person name="Goffeau A."/>
            <person name="Golightly E.J."/>
            <person name="Grandi G."/>
            <person name="Guiseppi G."/>
            <person name="Guy B.J."/>
            <person name="Haga K."/>
            <person name="Haiech J."/>
            <person name="Harwood C.R."/>
            <person name="Henaut A."/>
            <person name="Hilbert H."/>
            <person name="Holsappel S."/>
            <person name="Hosono S."/>
            <person name="Hullo M.-F."/>
            <person name="Itaya M."/>
            <person name="Jones L.-M."/>
            <person name="Joris B."/>
            <person name="Karamata D."/>
            <person name="Kasahara Y."/>
            <person name="Klaerr-Blanchard M."/>
            <person name="Klein C."/>
            <person name="Kobayashi Y."/>
            <person name="Koetter P."/>
            <person name="Koningstein G."/>
            <person name="Krogh S."/>
            <person name="Kumano M."/>
            <person name="Kurita K."/>
            <person name="Lapidus A."/>
            <person name="Lardinois S."/>
            <person name="Lauber J."/>
            <person name="Lazarevic V."/>
            <person name="Lee S.-M."/>
            <person name="Levine A."/>
            <person name="Liu H."/>
            <person name="Masuda S."/>
            <person name="Mauel C."/>
            <person name="Medigue C."/>
            <person name="Medina N."/>
            <person name="Mellado R.P."/>
            <person name="Mizuno M."/>
            <person name="Moestl D."/>
            <person name="Nakai S."/>
            <person name="Noback M."/>
            <person name="Noone D."/>
            <person name="O'Reilly M."/>
            <person name="Ogawa K."/>
            <person name="Ogiwara A."/>
            <person name="Oudega B."/>
            <person name="Park S.-H."/>
            <person name="Parro V."/>
            <person name="Pohl T.M."/>
            <person name="Portetelle D."/>
            <person name="Porwollik S."/>
            <person name="Prescott A.M."/>
            <person name="Presecan E."/>
            <person name="Pujic P."/>
            <person name="Purnelle B."/>
            <person name="Rapoport G."/>
            <person name="Rey M."/>
            <person name="Reynolds S."/>
            <person name="Rieger M."/>
            <person name="Rivolta C."/>
            <person name="Rocha E."/>
            <person name="Roche B."/>
            <person name="Rose M."/>
            <person name="Sadaie Y."/>
            <person name="Sato T."/>
            <person name="Scanlan E."/>
            <person name="Schleich S."/>
            <person name="Schroeter R."/>
            <person name="Scoffone F."/>
            <person name="Sekiguchi J."/>
            <person name="Sekowska A."/>
            <person name="Seror S.J."/>
            <person name="Serror P."/>
            <person name="Shin B.-S."/>
            <person name="Soldo B."/>
            <person name="Sorokin A."/>
            <person name="Tacconi E."/>
            <person name="Takagi T."/>
            <person name="Takahashi H."/>
            <person name="Takemaru K."/>
            <person name="Takeuchi M."/>
            <person name="Tamakoshi A."/>
            <person name="Tanaka T."/>
            <person name="Terpstra P."/>
            <person name="Tognoni A."/>
            <person name="Tosato V."/>
            <person name="Uchiyama S."/>
            <person name="Vandenbol M."/>
            <person name="Vannier F."/>
            <person name="Vassarotti A."/>
            <person name="Viari A."/>
            <person name="Wambutt R."/>
            <person name="Wedler E."/>
            <person name="Wedler H."/>
            <person name="Weitzenegger T."/>
            <person name="Winters P."/>
            <person name="Wipat A."/>
            <person name="Yamamoto H."/>
            <person name="Yamane K."/>
            <person name="Yasumoto K."/>
            <person name="Yata K."/>
            <person name="Yoshida K."/>
            <person name="Yoshikawa H.-F."/>
            <person name="Zumstein E."/>
            <person name="Yoshikawa H."/>
            <person name="Danchin A."/>
        </authorList>
    </citation>
    <scope>NUCLEOTIDE SEQUENCE [LARGE SCALE GENOMIC DNA]</scope>
    <source>
        <strain>168</strain>
    </source>
</reference>
<reference key="3">
    <citation type="journal article" date="2009" name="Microbiology">
        <title>From a consortium sequence to a unified sequence: the Bacillus subtilis 168 reference genome a decade later.</title>
        <authorList>
            <person name="Barbe V."/>
            <person name="Cruveiller S."/>
            <person name="Kunst F."/>
            <person name="Lenoble P."/>
            <person name="Meurice G."/>
            <person name="Sekowska A."/>
            <person name="Vallenet D."/>
            <person name="Wang T."/>
            <person name="Moszer I."/>
            <person name="Medigue C."/>
            <person name="Danchin A."/>
        </authorList>
    </citation>
    <scope>SEQUENCE REVISION TO 58</scope>
</reference>
<reference key="4">
    <citation type="journal article" date="2009" name="Mol. Microbiol.">
        <title>Genome-wide responses to carbonyl electrophiles in Bacillus subtilis: control of the thiol-dependent formaldehyde dehydrogenase AdhA and cysteine proteinase YraA by the MerR-family regulator YraB (AdhR).</title>
        <authorList>
            <person name="Nguyen T.T.H."/>
            <person name="Eiamphungporn W."/>
            <person name="Maeder U."/>
            <person name="Liebeke M."/>
            <person name="Lalk M."/>
            <person name="Hecker M."/>
            <person name="Helmann J.D."/>
            <person name="Antelmann H."/>
        </authorList>
    </citation>
    <scope>DISRUPTION PHENOTYPE</scope>
    <source>
        <strain>168</strain>
    </source>
</reference>
<name>ADHB_BACSU</name>
<comment type="cofactor">
    <cofactor evidence="1">
        <name>Zn(2+)</name>
        <dbReference type="ChEBI" id="CHEBI:29105"/>
    </cofactor>
    <text evidence="1">Binds 2 Zn(2+) ions per subunit.</text>
</comment>
<comment type="disruption phenotype">
    <text evidence="2">No aldehyde-stress related phenotype.</text>
</comment>
<comment type="similarity">
    <text evidence="3">Belongs to the zinc-containing alcohol dehydrogenase family. Class-III subfamily.</text>
</comment>
<sequence length="378" mass="41208">MKAVTYQGIKNVVVKDVPDPKIEKSDDMIIKVTSTAICGSDLHLIHGFIPNMQEDYVIGHEPMGIVEEVGSGVTKLKKGDRVIIPFNIACGECFFCKNQLESQCDQSNDNGEMGAYFGYSGQTGGYPGGQAEYLRVPFANFTHFKIPESCEEPDEKLSVIADAMTTGFWSVDNAGVKKGDTVIVLGCGPVGLFAQKFCWLKGAKRVIAVDYVNYRLQHAKRTNKVEIVNFEDHENTGNYLKEITKGGADVVIDAVGMDGKMSDLEFLASGLKLHGGTMSALVIASQAVRKGGTIQITGVYGGRYNGFPLGDIMQRNVNIRSGQAPVIHYMPYMFELVSTGKIDPGDVVSHVLPLSEAKHGYDIFDSKMDDCIKVVLKP</sequence>
<dbReference type="EC" id="1.-.-.-"/>
<dbReference type="EMBL" id="X92868">
    <property type="protein sequence ID" value="CAA63472.1"/>
    <property type="molecule type" value="Genomic_DNA"/>
</dbReference>
<dbReference type="EMBL" id="AL009126">
    <property type="protein sequence ID" value="CAB14638.2"/>
    <property type="molecule type" value="Genomic_DNA"/>
</dbReference>
<dbReference type="PIR" id="D69583">
    <property type="entry name" value="D69583"/>
</dbReference>
<dbReference type="RefSeq" id="NP_390574.2">
    <property type="nucleotide sequence ID" value="NC_000964.3"/>
</dbReference>
<dbReference type="RefSeq" id="WP_003229843.1">
    <property type="nucleotide sequence ID" value="NZ_OZ025638.1"/>
</dbReference>
<dbReference type="SMR" id="O06012"/>
<dbReference type="FunCoup" id="O06012">
    <property type="interactions" value="269"/>
</dbReference>
<dbReference type="STRING" id="224308.BSU26970"/>
<dbReference type="PaxDb" id="224308-BSU26970"/>
<dbReference type="EnsemblBacteria" id="CAB14638">
    <property type="protein sequence ID" value="CAB14638"/>
    <property type="gene ID" value="BSU_26970"/>
</dbReference>
<dbReference type="GeneID" id="937604"/>
<dbReference type="KEGG" id="bsu:BSU26970"/>
<dbReference type="PATRIC" id="fig|224308.179.peg.2929"/>
<dbReference type="eggNOG" id="COG1063">
    <property type="taxonomic scope" value="Bacteria"/>
</dbReference>
<dbReference type="InParanoid" id="O06012"/>
<dbReference type="OrthoDB" id="9769198at2"/>
<dbReference type="PhylomeDB" id="O06012"/>
<dbReference type="BioCyc" id="BSUB:BSU26970-MONOMER"/>
<dbReference type="Proteomes" id="UP000001570">
    <property type="component" value="Chromosome"/>
</dbReference>
<dbReference type="GO" id="GO:0016491">
    <property type="term" value="F:oxidoreductase activity"/>
    <property type="evidence" value="ECO:0007669"/>
    <property type="project" value="UniProtKB-KW"/>
</dbReference>
<dbReference type="GO" id="GO:0008270">
    <property type="term" value="F:zinc ion binding"/>
    <property type="evidence" value="ECO:0007669"/>
    <property type="project" value="InterPro"/>
</dbReference>
<dbReference type="CDD" id="cd08283">
    <property type="entry name" value="FDH_like_1"/>
    <property type="match status" value="1"/>
</dbReference>
<dbReference type="Gene3D" id="3.90.180.10">
    <property type="entry name" value="Medium-chain alcohol dehydrogenases, catalytic domain"/>
    <property type="match status" value="1"/>
</dbReference>
<dbReference type="Gene3D" id="3.40.50.720">
    <property type="entry name" value="NAD(P)-binding Rossmann-like Domain"/>
    <property type="match status" value="1"/>
</dbReference>
<dbReference type="InterPro" id="IPR013149">
    <property type="entry name" value="ADH-like_C"/>
</dbReference>
<dbReference type="InterPro" id="IPR013154">
    <property type="entry name" value="ADH-like_N"/>
</dbReference>
<dbReference type="InterPro" id="IPR002328">
    <property type="entry name" value="ADH_Zn_CS"/>
</dbReference>
<dbReference type="InterPro" id="IPR011032">
    <property type="entry name" value="GroES-like_sf"/>
</dbReference>
<dbReference type="InterPro" id="IPR036291">
    <property type="entry name" value="NAD(P)-bd_dom_sf"/>
</dbReference>
<dbReference type="PANTHER" id="PTHR42813:SF2">
    <property type="entry name" value="DEHYDROGENASE, ZINC-CONTAINING, PUTATIVE (AFU_ORTHOLOGUE AFUA_2G02810)-RELATED"/>
    <property type="match status" value="1"/>
</dbReference>
<dbReference type="PANTHER" id="PTHR42813">
    <property type="entry name" value="ZINC-TYPE ALCOHOL DEHYDROGENASE-LIKE"/>
    <property type="match status" value="1"/>
</dbReference>
<dbReference type="Pfam" id="PF08240">
    <property type="entry name" value="ADH_N"/>
    <property type="match status" value="1"/>
</dbReference>
<dbReference type="Pfam" id="PF00107">
    <property type="entry name" value="ADH_zinc_N"/>
    <property type="match status" value="1"/>
</dbReference>
<dbReference type="SUPFAM" id="SSF50129">
    <property type="entry name" value="GroES-like"/>
    <property type="match status" value="1"/>
</dbReference>
<dbReference type="SUPFAM" id="SSF51735">
    <property type="entry name" value="NAD(P)-binding Rossmann-fold domains"/>
    <property type="match status" value="1"/>
</dbReference>
<dbReference type="PROSITE" id="PS00059">
    <property type="entry name" value="ADH_ZINC"/>
    <property type="match status" value="1"/>
</dbReference>